<protein>
    <recommendedName>
        <fullName evidence="5">3-hydroxypropionyl-coenzyme A synthetase</fullName>
        <shortName evidence="2">3-hydroxypropionyl-CoA synthetase</shortName>
        <ecNumber>6.2.1.36</ecNumber>
    </recommendedName>
</protein>
<proteinExistence type="evidence at protein level"/>
<name>HPCAS_METS5</name>
<evidence type="ECO:0000250" key="1">
    <source>
        <dbReference type="UniProtKB" id="Q8ZKF6"/>
    </source>
</evidence>
<evidence type="ECO:0000250" key="2">
    <source>
        <dbReference type="UniProtKB" id="Q973W5"/>
    </source>
</evidence>
<evidence type="ECO:0000255" key="3"/>
<evidence type="ECO:0000269" key="4">
    <source>
    </source>
</evidence>
<evidence type="ECO:0000303" key="5">
    <source>
    </source>
</evidence>
<evidence type="ECO:0000305" key="6"/>
<organism>
    <name type="scientific">Metallosphaera sedula (strain ATCC 51363 / DSM 5348 / JCM 9185 / NBRC 15509 / TH2)</name>
    <dbReference type="NCBI Taxonomy" id="399549"/>
    <lineage>
        <taxon>Archaea</taxon>
        <taxon>Thermoproteota</taxon>
        <taxon>Thermoprotei</taxon>
        <taxon>Sulfolobales</taxon>
        <taxon>Sulfolobaceae</taxon>
        <taxon>Metallosphaera</taxon>
    </lineage>
</organism>
<feature type="chain" id="PRO_0000403054" description="3-hydroxypropionyl-coenzyme A synthetase">
    <location>
        <begin position="1"/>
        <end position="661"/>
    </location>
</feature>
<feature type="active site" evidence="1">
    <location>
        <position position="526"/>
    </location>
</feature>
<feature type="modified residue" description="N6-acetyllysine" evidence="1">
    <location>
        <position position="617"/>
    </location>
</feature>
<reference key="1">
    <citation type="journal article" date="2008" name="Appl. Environ. Microbiol.">
        <title>The genome sequence of the metal-mobilizing, extremely thermoacidophilic archaeon Metallosphaera sedula provides insights into bioleaching-associated metabolism.</title>
        <authorList>
            <person name="Auernik K.S."/>
            <person name="Maezato Y."/>
            <person name="Blum P.H."/>
            <person name="Kelly R.M."/>
        </authorList>
    </citation>
    <scope>NUCLEOTIDE SEQUENCE [LARGE SCALE GENOMIC DNA]</scope>
    <source>
        <strain>ATCC 51363 / DSM 5348 / JCM 9185 / NBRC 15509 / TH2</strain>
    </source>
</reference>
<reference evidence="6" key="2">
    <citation type="journal article" date="2008" name="J. Bacteriol.">
        <title>3-Hydroxypropionyl-coenzyme A synthetase from Metallosphaera sedula, an enzyme involved in autotrophic CO2 fixation.</title>
        <authorList>
            <person name="Alber B.E."/>
            <person name="Kung J.W."/>
            <person name="Fuchs G."/>
        </authorList>
    </citation>
    <scope>PROTEIN SEQUENCE OF 186-198</scope>
    <scope>FUNCTION</scope>
    <scope>CATALYTIC ACTIVITY</scope>
    <scope>BIOPHYSICOCHEMICAL PROPERTIES</scope>
    <scope>SUBUNIT</scope>
    <scope>INDUCTION</scope>
</reference>
<keyword id="KW-0007">Acetylation</keyword>
<keyword id="KW-0067">ATP-binding</keyword>
<keyword id="KW-0903">Direct protein sequencing</keyword>
<keyword id="KW-0436">Ligase</keyword>
<keyword id="KW-0547">Nucleotide-binding</keyword>
<keyword id="KW-1185">Reference proteome</keyword>
<sequence length="661" mass="74402">MFMRYIMVEEQTLKTGSQELEEKADYNMRYYAHLMKLSKEKPAEFWGSLAQDLLDWYEPWKETMRQEDPMTRWFIGGKINASYNAVDRHLNGPRKFKAAVIWESELGERKIVTYQDMFYEVNRWANALRSLGVGKGDRVTIYMPLTPEGIAAMLASARIGAIHSVIFAGFGSQAIADRVEDAKAKVVITADAYPRRGKVVELKKTVDEALNSLGERSPVQHVLVYRRMKTDVNMKEGRDVFFDEVGKYRYVEPERMDSNDPLFILYTSGTTGKPKGIMHSTGGYLTGTAVMLLWSYGLSQENDVLFNTSDIGWIVGHSYITYSPLIMGRTVVIYESAPDYPYPDKWAEIIERYRATTFGTSATALRYFMKYGDEYVKNHDLSSIRIIVTNGEVLNYSPWKWGLEVLGGGKVFMSHQWWQTETGAPNLGYLPGIIYMPMKSGPASGFPLPGNFVEVLDENGNPSAPRVRGYLVMRPPFPPNMMMGMWNDNGERLKKTYFSKFGSLYYPGDFAMVDEDGYIWVLGRADETLKIAAHRIGAGEVESAITSHPSVAEAAVIGVPDSVKGEEVHAFVVLKQGYAPSSELAKDIQSHVRKVMGPIVSPQIHFVDKLPKTRSGKVMRRVIKAVMMGSSAGDLTTIEDEASMDEIKKAVEELKKELKTS</sequence>
<comment type="function">
    <text evidence="4">Plays a role in the autotrophic CO(2) fixation pathway. Activates 3-hydroxypropionate to its CoA ester. Can also activate propionate, and to a lesser extent acrylate, acetate and butyrate.</text>
</comment>
<comment type="catalytic activity">
    <reaction evidence="4">
        <text>3-hydroxypropanoate + ATP + CoA = 3-hydroxypropanoyl-CoA + AMP + diphosphate</text>
        <dbReference type="Rhea" id="RHEA:26534"/>
        <dbReference type="ChEBI" id="CHEBI:16510"/>
        <dbReference type="ChEBI" id="CHEBI:30616"/>
        <dbReference type="ChEBI" id="CHEBI:33019"/>
        <dbReference type="ChEBI" id="CHEBI:57287"/>
        <dbReference type="ChEBI" id="CHEBI:58528"/>
        <dbReference type="ChEBI" id="CHEBI:456215"/>
        <dbReference type="EC" id="6.2.1.36"/>
    </reaction>
</comment>
<comment type="biophysicochemical properties">
    <kinetics>
        <KM evidence="4">180 uM for 3-hydroxypropionate</KM>
        <KM evidence="4">45 uM for ATP</KM>
    </kinetics>
    <temperatureDependence>
        <text evidence="4">Stable for 15 minutes at up to 80 degrees Celsius.</text>
    </temperatureDependence>
</comment>
<comment type="subunit">
    <text evidence="4">Homotetramer.</text>
</comment>
<comment type="induction">
    <text evidence="4">By autotrophic growth conditions.</text>
</comment>
<comment type="similarity">
    <text evidence="3">Belongs to the ATP-dependent AMP-binding enzyme family.</text>
</comment>
<dbReference type="EC" id="6.2.1.36"/>
<dbReference type="EMBL" id="CP000682">
    <property type="protein sequence ID" value="ABP95613.1"/>
    <property type="molecule type" value="Genomic_DNA"/>
</dbReference>
<dbReference type="SMR" id="A4YGR1"/>
<dbReference type="STRING" id="399549.Msed_1456"/>
<dbReference type="KEGG" id="mse:Msed_1456"/>
<dbReference type="eggNOG" id="arCOG01529">
    <property type="taxonomic scope" value="Archaea"/>
</dbReference>
<dbReference type="HOGENOM" id="CLU_000022_3_6_2"/>
<dbReference type="BioCyc" id="MetaCyc:MONOMER-13728"/>
<dbReference type="BRENDA" id="6.2.1.17">
    <property type="organism ID" value="7245"/>
</dbReference>
<dbReference type="BRENDA" id="6.2.1.36">
    <property type="organism ID" value="7245"/>
</dbReference>
<dbReference type="SABIO-RK" id="A4YGR1"/>
<dbReference type="Proteomes" id="UP000000242">
    <property type="component" value="Chromosome"/>
</dbReference>
<dbReference type="GO" id="GO:0043955">
    <property type="term" value="F:3-hydroxypropionyl-CoA synthetase activity"/>
    <property type="evidence" value="ECO:0000314"/>
    <property type="project" value="UniProtKB"/>
</dbReference>
<dbReference type="GO" id="GO:0003987">
    <property type="term" value="F:acetate-CoA ligase activity"/>
    <property type="evidence" value="ECO:0007669"/>
    <property type="project" value="InterPro"/>
</dbReference>
<dbReference type="GO" id="GO:0016208">
    <property type="term" value="F:AMP binding"/>
    <property type="evidence" value="ECO:0007669"/>
    <property type="project" value="InterPro"/>
</dbReference>
<dbReference type="GO" id="GO:0005524">
    <property type="term" value="F:ATP binding"/>
    <property type="evidence" value="ECO:0007669"/>
    <property type="project" value="UniProtKB-KW"/>
</dbReference>
<dbReference type="GO" id="GO:0019427">
    <property type="term" value="P:acetyl-CoA biosynthetic process from acetate"/>
    <property type="evidence" value="ECO:0007669"/>
    <property type="project" value="InterPro"/>
</dbReference>
<dbReference type="GO" id="GO:0043427">
    <property type="term" value="P:carbon fixation by 3-hydroxypropionate cycle"/>
    <property type="evidence" value="ECO:0000314"/>
    <property type="project" value="UniProtKB"/>
</dbReference>
<dbReference type="FunFam" id="3.40.50.12780:FF:000001">
    <property type="entry name" value="Acetyl-coenzyme A synthetase"/>
    <property type="match status" value="1"/>
</dbReference>
<dbReference type="Gene3D" id="3.30.300.30">
    <property type="match status" value="1"/>
</dbReference>
<dbReference type="Gene3D" id="3.40.50.12780">
    <property type="entry name" value="N-terminal domain of ligase-like"/>
    <property type="match status" value="1"/>
</dbReference>
<dbReference type="InterPro" id="IPR011904">
    <property type="entry name" value="Ac_CoA_lig"/>
</dbReference>
<dbReference type="InterPro" id="IPR032387">
    <property type="entry name" value="ACAS_N"/>
</dbReference>
<dbReference type="InterPro" id="IPR025110">
    <property type="entry name" value="AMP-bd_C"/>
</dbReference>
<dbReference type="InterPro" id="IPR045851">
    <property type="entry name" value="AMP-bd_C_sf"/>
</dbReference>
<dbReference type="InterPro" id="IPR020845">
    <property type="entry name" value="AMP-binding_CS"/>
</dbReference>
<dbReference type="InterPro" id="IPR000873">
    <property type="entry name" value="AMP-dep_synth/lig_dom"/>
</dbReference>
<dbReference type="InterPro" id="IPR042099">
    <property type="entry name" value="ANL_N_sf"/>
</dbReference>
<dbReference type="NCBIfam" id="TIGR02188">
    <property type="entry name" value="Ac_CoA_lig_AcsA"/>
    <property type="match status" value="1"/>
</dbReference>
<dbReference type="NCBIfam" id="NF001208">
    <property type="entry name" value="PRK00174.1"/>
    <property type="match status" value="1"/>
</dbReference>
<dbReference type="PANTHER" id="PTHR24095">
    <property type="entry name" value="ACETYL-COENZYME A SYNTHETASE"/>
    <property type="match status" value="1"/>
</dbReference>
<dbReference type="PANTHER" id="PTHR24095:SF232">
    <property type="entry name" value="ACETYL-COENZYME A SYNTHETASE"/>
    <property type="match status" value="1"/>
</dbReference>
<dbReference type="Pfam" id="PF16177">
    <property type="entry name" value="ACAS_N"/>
    <property type="match status" value="1"/>
</dbReference>
<dbReference type="Pfam" id="PF00501">
    <property type="entry name" value="AMP-binding"/>
    <property type="match status" value="1"/>
</dbReference>
<dbReference type="Pfam" id="PF13193">
    <property type="entry name" value="AMP-binding_C"/>
    <property type="match status" value="1"/>
</dbReference>
<dbReference type="SUPFAM" id="SSF56801">
    <property type="entry name" value="Acetyl-CoA synthetase-like"/>
    <property type="match status" value="1"/>
</dbReference>
<dbReference type="PROSITE" id="PS00455">
    <property type="entry name" value="AMP_BINDING"/>
    <property type="match status" value="1"/>
</dbReference>
<accession>A4YGR1</accession>
<gene>
    <name type="ordered locus">Msed_1456</name>
</gene>